<gene>
    <name type="primary">mmsB</name>
    <name type="ordered locus">MT0775</name>
</gene>
<reference key="1">
    <citation type="journal article" date="2002" name="J. Bacteriol.">
        <title>Whole-genome comparison of Mycobacterium tuberculosis clinical and laboratory strains.</title>
        <authorList>
            <person name="Fleischmann R.D."/>
            <person name="Alland D."/>
            <person name="Eisen J.A."/>
            <person name="Carpenter L."/>
            <person name="White O."/>
            <person name="Peterson J.D."/>
            <person name="DeBoy R.T."/>
            <person name="Dodson R.J."/>
            <person name="Gwinn M.L."/>
            <person name="Haft D.H."/>
            <person name="Hickey E.K."/>
            <person name="Kolonay J.F."/>
            <person name="Nelson W.C."/>
            <person name="Umayam L.A."/>
            <person name="Ermolaeva M.D."/>
            <person name="Salzberg S.L."/>
            <person name="Delcher A."/>
            <person name="Utterback T.R."/>
            <person name="Weidman J.F."/>
            <person name="Khouri H.M."/>
            <person name="Gill J."/>
            <person name="Mikula A."/>
            <person name="Bishai W."/>
            <person name="Jacobs W.R. Jr."/>
            <person name="Venter J.C."/>
            <person name="Fraser C.M."/>
        </authorList>
    </citation>
    <scope>NUCLEOTIDE SEQUENCE [LARGE SCALE GENOMIC DNA]</scope>
    <source>
        <strain>CDC 1551 / Oshkosh</strain>
    </source>
</reference>
<proteinExistence type="inferred from homology"/>
<organism>
    <name type="scientific">Mycobacterium tuberculosis (strain CDC 1551 / Oshkosh)</name>
    <dbReference type="NCBI Taxonomy" id="83331"/>
    <lineage>
        <taxon>Bacteria</taxon>
        <taxon>Bacillati</taxon>
        <taxon>Actinomycetota</taxon>
        <taxon>Actinomycetes</taxon>
        <taxon>Mycobacteriales</taxon>
        <taxon>Mycobacteriaceae</taxon>
        <taxon>Mycobacterium</taxon>
        <taxon>Mycobacterium tuberculosis complex</taxon>
    </lineage>
</organism>
<keyword id="KW-0101">Branched-chain amino acid catabolism</keyword>
<keyword id="KW-0520">NAD</keyword>
<keyword id="KW-0560">Oxidoreductase</keyword>
<keyword id="KW-1185">Reference proteome</keyword>
<name>MMSB_MYCTO</name>
<comment type="catalytic activity">
    <reaction>
        <text>3-hydroxy-2-methylpropanoate + NAD(+) = 2-methyl-3-oxopropanoate + NADH + H(+)</text>
        <dbReference type="Rhea" id="RHEA:17681"/>
        <dbReference type="ChEBI" id="CHEBI:11805"/>
        <dbReference type="ChEBI" id="CHEBI:15378"/>
        <dbReference type="ChEBI" id="CHEBI:57540"/>
        <dbReference type="ChEBI" id="CHEBI:57700"/>
        <dbReference type="ChEBI" id="CHEBI:57945"/>
        <dbReference type="EC" id="1.1.1.31"/>
    </reaction>
</comment>
<comment type="pathway">
    <text>Amino-acid degradation; L-valine degradation.</text>
</comment>
<comment type="similarity">
    <text evidence="2">Belongs to the HIBADH-related family.</text>
</comment>
<evidence type="ECO:0000250" key="1"/>
<evidence type="ECO:0000305" key="2"/>
<feature type="chain" id="PRO_0000427046" description="Probable 3-hydroxyisobutyrate dehydrogenase">
    <location>
        <begin position="1"/>
        <end position="294"/>
    </location>
</feature>
<feature type="active site" evidence="1">
    <location>
        <position position="168"/>
    </location>
</feature>
<feature type="binding site" evidence="1">
    <location>
        <begin position="3"/>
        <end position="31"/>
    </location>
    <ligand>
        <name>NAD(+)</name>
        <dbReference type="ChEBI" id="CHEBI:57540"/>
    </ligand>
</feature>
<feature type="binding site" evidence="1">
    <location>
        <position position="93"/>
    </location>
    <ligand>
        <name>NAD(+)</name>
        <dbReference type="ChEBI" id="CHEBI:57540"/>
    </ligand>
</feature>
<feature type="binding site" evidence="1">
    <location>
        <position position="243"/>
    </location>
    <ligand>
        <name>NAD(+)</name>
        <dbReference type="ChEBI" id="CHEBI:57540"/>
    </ligand>
</feature>
<sequence length="294" mass="29679">MTTIAFLGLGNMGAPMSANLVGAGHVVRGFDPAPTAASGAAAHGVAVFRSAPEAVAEADVVITMLPTGEVVRRCYTDVLAAARPATLFIDSSTISVTDAREVHALAESHGMLQLDAPVSGGVKGAAAATLAFMVGGDESTLRRARPVLEPMAGKIIHCGAAGAGQAAKVCNNMVLAVQQIAIAEAFVLAEKLGLSAQSLFDVITGATGNCWAVHTNCPVPGPVPTSPANNDFKPGFSTALMNKDLGLAMDAVAATGATAPLGSHAADIYAKFAADHADLDFSAVIHTLRARADA</sequence>
<protein>
    <recommendedName>
        <fullName>Probable 3-hydroxyisobutyrate dehydrogenase</fullName>
        <shortName>HIBADH</shortName>
        <ecNumber>1.1.1.31</ecNumber>
    </recommendedName>
</protein>
<accession>P9WNY4</accession>
<accession>L0T7L8</accession>
<accession>O53814</accession>
<accession>P63935</accession>
<dbReference type="EC" id="1.1.1.31"/>
<dbReference type="EMBL" id="AE000516">
    <property type="protein sequence ID" value="AAK45016.1"/>
    <property type="molecule type" value="Genomic_DNA"/>
</dbReference>
<dbReference type="PIR" id="B70825">
    <property type="entry name" value="B70825"/>
</dbReference>
<dbReference type="RefSeq" id="WP_003403844.1">
    <property type="nucleotide sequence ID" value="NZ_KK341227.1"/>
</dbReference>
<dbReference type="SMR" id="P9WNY4"/>
<dbReference type="GeneID" id="45424715"/>
<dbReference type="KEGG" id="mtc:MT0775"/>
<dbReference type="PATRIC" id="fig|83331.31.peg.833"/>
<dbReference type="HOGENOM" id="CLU_035117_6_0_11"/>
<dbReference type="UniPathway" id="UPA00362"/>
<dbReference type="Proteomes" id="UP000001020">
    <property type="component" value="Chromosome"/>
</dbReference>
<dbReference type="GO" id="GO:0008442">
    <property type="term" value="F:3-hydroxyisobutyrate dehydrogenase activity"/>
    <property type="evidence" value="ECO:0007669"/>
    <property type="project" value="UniProtKB-EC"/>
</dbReference>
<dbReference type="GO" id="GO:0051287">
    <property type="term" value="F:NAD binding"/>
    <property type="evidence" value="ECO:0007669"/>
    <property type="project" value="InterPro"/>
</dbReference>
<dbReference type="GO" id="GO:0050661">
    <property type="term" value="F:NADP binding"/>
    <property type="evidence" value="ECO:0007669"/>
    <property type="project" value="InterPro"/>
</dbReference>
<dbReference type="GO" id="GO:0006574">
    <property type="term" value="P:valine catabolic process"/>
    <property type="evidence" value="ECO:0007669"/>
    <property type="project" value="UniProtKB-UniPathway"/>
</dbReference>
<dbReference type="FunFam" id="1.10.1040.10:FF:000006">
    <property type="entry name" value="3-hydroxyisobutyrate dehydrogenase"/>
    <property type="match status" value="1"/>
</dbReference>
<dbReference type="Gene3D" id="1.10.1040.10">
    <property type="entry name" value="N-(1-d-carboxylethyl)-l-norvaline Dehydrogenase, domain 2"/>
    <property type="match status" value="1"/>
</dbReference>
<dbReference type="Gene3D" id="3.40.50.720">
    <property type="entry name" value="NAD(P)-binding Rossmann-like Domain"/>
    <property type="match status" value="1"/>
</dbReference>
<dbReference type="InterPro" id="IPR002204">
    <property type="entry name" value="3-OH-isobutyrate_DH-rel_CS"/>
</dbReference>
<dbReference type="InterPro" id="IPR008927">
    <property type="entry name" value="6-PGluconate_DH-like_C_sf"/>
</dbReference>
<dbReference type="InterPro" id="IPR013328">
    <property type="entry name" value="6PGD_dom2"/>
</dbReference>
<dbReference type="InterPro" id="IPR006115">
    <property type="entry name" value="6PGDH_NADP-bd"/>
</dbReference>
<dbReference type="InterPro" id="IPR011548">
    <property type="entry name" value="HIBADH"/>
</dbReference>
<dbReference type="InterPro" id="IPR029154">
    <property type="entry name" value="HIBADH-like_NADP-bd"/>
</dbReference>
<dbReference type="InterPro" id="IPR015815">
    <property type="entry name" value="HIBADH-related"/>
</dbReference>
<dbReference type="InterPro" id="IPR036291">
    <property type="entry name" value="NAD(P)-bd_dom_sf"/>
</dbReference>
<dbReference type="NCBIfam" id="TIGR01692">
    <property type="entry name" value="HIBADH"/>
    <property type="match status" value="1"/>
</dbReference>
<dbReference type="PANTHER" id="PTHR22981:SF7">
    <property type="entry name" value="3-HYDROXYISOBUTYRATE DEHYDROGENASE, MITOCHONDRIAL"/>
    <property type="match status" value="1"/>
</dbReference>
<dbReference type="PANTHER" id="PTHR22981">
    <property type="entry name" value="3-HYDROXYISOBUTYRATE DEHYDROGENASE-RELATED"/>
    <property type="match status" value="1"/>
</dbReference>
<dbReference type="Pfam" id="PF14833">
    <property type="entry name" value="NAD_binding_11"/>
    <property type="match status" value="1"/>
</dbReference>
<dbReference type="Pfam" id="PF03446">
    <property type="entry name" value="NAD_binding_2"/>
    <property type="match status" value="1"/>
</dbReference>
<dbReference type="PIRSF" id="PIRSF000103">
    <property type="entry name" value="HIBADH"/>
    <property type="match status" value="1"/>
</dbReference>
<dbReference type="SUPFAM" id="SSF48179">
    <property type="entry name" value="6-phosphogluconate dehydrogenase C-terminal domain-like"/>
    <property type="match status" value="1"/>
</dbReference>
<dbReference type="SUPFAM" id="SSF51735">
    <property type="entry name" value="NAD(P)-binding Rossmann-fold domains"/>
    <property type="match status" value="1"/>
</dbReference>
<dbReference type="PROSITE" id="PS00895">
    <property type="entry name" value="3_HYDROXYISOBUT_DH"/>
    <property type="match status" value="1"/>
</dbReference>